<protein>
    <recommendedName>
        <fullName evidence="1">Ribulose bisphosphate carboxylase large chain</fullName>
        <shortName evidence="1">RuBisCO large subunit</shortName>
        <ecNumber evidence="1">4.1.1.39</ecNumber>
    </recommendedName>
</protein>
<gene>
    <name evidence="1" type="primary">cbbL</name>
    <name evidence="1" type="synonym">rbcL</name>
    <name type="ordered locus">Minf_1264</name>
</gene>
<keyword id="KW-0113">Calvin cycle</keyword>
<keyword id="KW-0120">Carbon dioxide fixation</keyword>
<keyword id="KW-0456">Lyase</keyword>
<keyword id="KW-0460">Magnesium</keyword>
<keyword id="KW-0479">Metal-binding</keyword>
<keyword id="KW-0503">Monooxygenase</keyword>
<keyword id="KW-0560">Oxidoreductase</keyword>
<feature type="chain" id="PRO_0000355750" description="Ribulose bisphosphate carboxylase large chain">
    <location>
        <begin position="1"/>
        <end position="486"/>
    </location>
</feature>
<feature type="active site" description="Proton acceptor" evidence="1">
    <location>
        <position position="178"/>
    </location>
</feature>
<feature type="active site" description="Proton acceptor" evidence="1">
    <location>
        <position position="296"/>
    </location>
</feature>
<feature type="binding site" description="in homodimeric partner" evidence="1">
    <location>
        <position position="126"/>
    </location>
    <ligand>
        <name>substrate</name>
    </ligand>
</feature>
<feature type="binding site" evidence="1">
    <location>
        <position position="176"/>
    </location>
    <ligand>
        <name>substrate</name>
    </ligand>
</feature>
<feature type="binding site" evidence="1">
    <location>
        <position position="180"/>
    </location>
    <ligand>
        <name>substrate</name>
    </ligand>
</feature>
<feature type="binding site" description="via carbamate group" evidence="1">
    <location>
        <position position="204"/>
    </location>
    <ligand>
        <name>Mg(2+)</name>
        <dbReference type="ChEBI" id="CHEBI:18420"/>
    </ligand>
</feature>
<feature type="binding site" evidence="1">
    <location>
        <position position="206"/>
    </location>
    <ligand>
        <name>Mg(2+)</name>
        <dbReference type="ChEBI" id="CHEBI:18420"/>
    </ligand>
</feature>
<feature type="binding site" evidence="1">
    <location>
        <position position="207"/>
    </location>
    <ligand>
        <name>Mg(2+)</name>
        <dbReference type="ChEBI" id="CHEBI:18420"/>
    </ligand>
</feature>
<feature type="binding site" evidence="1">
    <location>
        <position position="297"/>
    </location>
    <ligand>
        <name>substrate</name>
    </ligand>
</feature>
<feature type="binding site" evidence="1">
    <location>
        <position position="329"/>
    </location>
    <ligand>
        <name>substrate</name>
    </ligand>
</feature>
<feature type="binding site" evidence="1">
    <location>
        <position position="381"/>
    </location>
    <ligand>
        <name>substrate</name>
    </ligand>
</feature>
<feature type="site" description="Transition state stabilizer" evidence="1">
    <location>
        <position position="336"/>
    </location>
</feature>
<feature type="modified residue" description="N6-carboxylysine" evidence="1">
    <location>
        <position position="204"/>
    </location>
</feature>
<dbReference type="EC" id="4.1.1.39" evidence="1"/>
<dbReference type="EMBL" id="CP000975">
    <property type="protein sequence ID" value="ACD83318.1"/>
    <property type="molecule type" value="Genomic_DNA"/>
</dbReference>
<dbReference type="RefSeq" id="WP_012463600.1">
    <property type="nucleotide sequence ID" value="NC_010794.1"/>
</dbReference>
<dbReference type="SMR" id="B3DVG5"/>
<dbReference type="STRING" id="481448.Minf_1264"/>
<dbReference type="KEGG" id="min:Minf_1264"/>
<dbReference type="eggNOG" id="COG1850">
    <property type="taxonomic scope" value="Bacteria"/>
</dbReference>
<dbReference type="HOGENOM" id="CLU_031450_2_0_0"/>
<dbReference type="OrthoDB" id="9770811at2"/>
<dbReference type="Proteomes" id="UP000009149">
    <property type="component" value="Chromosome"/>
</dbReference>
<dbReference type="GO" id="GO:0000287">
    <property type="term" value="F:magnesium ion binding"/>
    <property type="evidence" value="ECO:0007669"/>
    <property type="project" value="UniProtKB-UniRule"/>
</dbReference>
<dbReference type="GO" id="GO:0004497">
    <property type="term" value="F:monooxygenase activity"/>
    <property type="evidence" value="ECO:0007669"/>
    <property type="project" value="UniProtKB-KW"/>
</dbReference>
<dbReference type="GO" id="GO:0016984">
    <property type="term" value="F:ribulose-bisphosphate carboxylase activity"/>
    <property type="evidence" value="ECO:0007669"/>
    <property type="project" value="UniProtKB-UniRule"/>
</dbReference>
<dbReference type="GO" id="GO:0019253">
    <property type="term" value="P:reductive pentose-phosphate cycle"/>
    <property type="evidence" value="ECO:0007669"/>
    <property type="project" value="UniProtKB-UniRule"/>
</dbReference>
<dbReference type="CDD" id="cd08212">
    <property type="entry name" value="RuBisCO_large_I"/>
    <property type="match status" value="1"/>
</dbReference>
<dbReference type="Gene3D" id="3.20.20.110">
    <property type="entry name" value="Ribulose bisphosphate carboxylase, large subunit, C-terminal domain"/>
    <property type="match status" value="1"/>
</dbReference>
<dbReference type="Gene3D" id="3.30.70.150">
    <property type="entry name" value="RuBisCO large subunit, N-terminal domain"/>
    <property type="match status" value="1"/>
</dbReference>
<dbReference type="HAMAP" id="MF_01338">
    <property type="entry name" value="RuBisCO_L_type1"/>
    <property type="match status" value="1"/>
</dbReference>
<dbReference type="InterPro" id="IPR033966">
    <property type="entry name" value="RuBisCO"/>
</dbReference>
<dbReference type="InterPro" id="IPR020878">
    <property type="entry name" value="RuBisCo_large_chain_AS"/>
</dbReference>
<dbReference type="InterPro" id="IPR000685">
    <property type="entry name" value="RuBisCO_lsu_C"/>
</dbReference>
<dbReference type="InterPro" id="IPR036376">
    <property type="entry name" value="RuBisCO_lsu_C_sf"/>
</dbReference>
<dbReference type="InterPro" id="IPR017443">
    <property type="entry name" value="RuBisCO_lsu_fd_N"/>
</dbReference>
<dbReference type="InterPro" id="IPR036422">
    <property type="entry name" value="RuBisCO_lsu_N_sf"/>
</dbReference>
<dbReference type="InterPro" id="IPR020888">
    <property type="entry name" value="RuBisCO_lsuI"/>
</dbReference>
<dbReference type="NCBIfam" id="NF003252">
    <property type="entry name" value="PRK04208.1"/>
    <property type="match status" value="1"/>
</dbReference>
<dbReference type="PANTHER" id="PTHR42704">
    <property type="entry name" value="RIBULOSE BISPHOSPHATE CARBOXYLASE"/>
    <property type="match status" value="1"/>
</dbReference>
<dbReference type="PANTHER" id="PTHR42704:SF17">
    <property type="entry name" value="RIBULOSE BISPHOSPHATE CARBOXYLASE LARGE CHAIN"/>
    <property type="match status" value="1"/>
</dbReference>
<dbReference type="Pfam" id="PF00016">
    <property type="entry name" value="RuBisCO_large"/>
    <property type="match status" value="1"/>
</dbReference>
<dbReference type="Pfam" id="PF02788">
    <property type="entry name" value="RuBisCO_large_N"/>
    <property type="match status" value="1"/>
</dbReference>
<dbReference type="SFLD" id="SFLDG01052">
    <property type="entry name" value="RuBisCO"/>
    <property type="match status" value="1"/>
</dbReference>
<dbReference type="SFLD" id="SFLDS00014">
    <property type="entry name" value="RuBisCO"/>
    <property type="match status" value="1"/>
</dbReference>
<dbReference type="SFLD" id="SFLDG00301">
    <property type="entry name" value="RuBisCO-like_proteins"/>
    <property type="match status" value="1"/>
</dbReference>
<dbReference type="SUPFAM" id="SSF51649">
    <property type="entry name" value="RuBisCo, C-terminal domain"/>
    <property type="match status" value="1"/>
</dbReference>
<dbReference type="SUPFAM" id="SSF54966">
    <property type="entry name" value="RuBisCO, large subunit, small (N-terminal) domain"/>
    <property type="match status" value="1"/>
</dbReference>
<dbReference type="PROSITE" id="PS00157">
    <property type="entry name" value="RUBISCO_LARGE"/>
    <property type="match status" value="1"/>
</dbReference>
<comment type="function">
    <text evidence="1">RuBisCO catalyzes two reactions: the carboxylation of D-ribulose 1,5-bisphosphate, the primary event in carbon dioxide fixation, as well as the oxidative fragmentation of the pentose substrate. Both reactions occur simultaneously and in competition at the same active site.</text>
</comment>
<comment type="catalytic activity">
    <reaction evidence="1">
        <text>2 (2R)-3-phosphoglycerate + 2 H(+) = D-ribulose 1,5-bisphosphate + CO2 + H2O</text>
        <dbReference type="Rhea" id="RHEA:23124"/>
        <dbReference type="ChEBI" id="CHEBI:15377"/>
        <dbReference type="ChEBI" id="CHEBI:15378"/>
        <dbReference type="ChEBI" id="CHEBI:16526"/>
        <dbReference type="ChEBI" id="CHEBI:57870"/>
        <dbReference type="ChEBI" id="CHEBI:58272"/>
        <dbReference type="EC" id="4.1.1.39"/>
    </reaction>
</comment>
<comment type="catalytic activity">
    <reaction evidence="1">
        <text>D-ribulose 1,5-bisphosphate + O2 = 2-phosphoglycolate + (2R)-3-phosphoglycerate + 2 H(+)</text>
        <dbReference type="Rhea" id="RHEA:36631"/>
        <dbReference type="ChEBI" id="CHEBI:15378"/>
        <dbReference type="ChEBI" id="CHEBI:15379"/>
        <dbReference type="ChEBI" id="CHEBI:57870"/>
        <dbReference type="ChEBI" id="CHEBI:58033"/>
        <dbReference type="ChEBI" id="CHEBI:58272"/>
    </reaction>
</comment>
<comment type="cofactor">
    <cofactor evidence="1">
        <name>Mg(2+)</name>
        <dbReference type="ChEBI" id="CHEBI:18420"/>
    </cofactor>
    <text evidence="1">Binds 1 Mg(2+) ion per subunit.</text>
</comment>
<comment type="subunit">
    <text evidence="1">Heterohexadecamer of 8 large chains and 8 small chains.</text>
</comment>
<comment type="miscellaneous">
    <text evidence="1">The basic functional RuBisCO is composed of a large chain homodimer in a 'head-to-tail' conformation. In form I RuBisCO this homodimer is arranged in a barrel-like tetramer with the small subunits forming a tetrameric 'cap' on each end of the 'barrel'.</text>
</comment>
<comment type="similarity">
    <text evidence="1">Belongs to the RuBisCO large chain family. Type I subfamily.</text>
</comment>
<name>RBL_METI4</name>
<reference key="1">
    <citation type="journal article" date="2008" name="Biol. Direct">
        <title>Complete genome sequence of the extremely acidophilic methanotroph isolate V4, Methylacidiphilum infernorum, a representative of the bacterial phylum Verrucomicrobia.</title>
        <authorList>
            <person name="Hou S."/>
            <person name="Makarova K.S."/>
            <person name="Saw J.H."/>
            <person name="Senin P."/>
            <person name="Ly B.V."/>
            <person name="Zhou Z."/>
            <person name="Ren Y."/>
            <person name="Wang J."/>
            <person name="Galperin M.Y."/>
            <person name="Omelchenko M.V."/>
            <person name="Wolf Y.I."/>
            <person name="Yutin N."/>
            <person name="Koonin E.V."/>
            <person name="Stott M.B."/>
            <person name="Mountain B.W."/>
            <person name="Crowe M.A."/>
            <person name="Smirnova A.V."/>
            <person name="Dunfield P.F."/>
            <person name="Feng L."/>
            <person name="Wang L."/>
            <person name="Alam M."/>
        </authorList>
    </citation>
    <scope>NUCLEOTIDE SEQUENCE [LARGE SCALE GENOMIC DNA]</scope>
    <source>
        <strain>Isolate V4</strain>
    </source>
</reference>
<sequence length="486" mass="53694">MVIAGDGKAGAKKSRWSAGVTPYAEMGYYNADYVPKDTDILAAFRFVPQEGVEPIEAGAAVAGESSTATWTVVWTDRLTAYEHYQGKCFRVEPVPGTNQYIAFIAYDLDLFEEGSIANMSSSIIGNVFGFKALKSLRLEDLRIPPHYVKTFQGPAHGIMMEREYLNKYGRPLLGATVKPKLGLSAKNYGRVVYEALRGGLDFTKDDENINSQPFMRWRDRWLFCMEAVNKAMAETGEIKGHYLNVTAATMEEMYERAEFAKELGSVIIMVDLTAGFTAIQSMAKWCRKNGVLLHLHRAGHSTYTRQKIHGVNFRVIAKWMRLAGVDHIHAGTVVGKLEGDLHSVQGYYKTLRTQYTEADPLLGLYFEQDWASMPGVMPVASGGIHAGQMHLLLSYLGEDTILQFGGGTIGHPDGIAAGATANRVAVEVMVQARNEGKDILREGPEILEKACRWSPALAKAIETWKDISFEFESTDVPDAVAMPTIA</sequence>
<organism>
    <name type="scientific">Methylacidiphilum infernorum (isolate V4)</name>
    <name type="common">Methylokorus infernorum (strain V4)</name>
    <dbReference type="NCBI Taxonomy" id="481448"/>
    <lineage>
        <taxon>Bacteria</taxon>
        <taxon>Pseudomonadati</taxon>
        <taxon>Verrucomicrobiota</taxon>
        <taxon>Methylacidiphilae</taxon>
        <taxon>Methylacidiphilales</taxon>
        <taxon>Methylacidiphilaceae</taxon>
        <taxon>Methylacidiphilum (ex Ratnadevi et al. 2023)</taxon>
    </lineage>
</organism>
<evidence type="ECO:0000255" key="1">
    <source>
        <dbReference type="HAMAP-Rule" id="MF_01338"/>
    </source>
</evidence>
<accession>B3DVG5</accession>
<proteinExistence type="inferred from homology"/>